<comment type="function">
    <text evidence="1">Core subunit of the mitochondrial membrane respiratory chain NADH dehydrogenase (Complex I) that is believed to belong to the minimal assembly required for catalysis. Complex I functions in the transfer of electrons from NADH to the respiratory chain. The immediate electron acceptor for the enzyme is believed to be ubiquinone (By similarity).</text>
</comment>
<comment type="catalytic activity">
    <reaction>
        <text>a ubiquinone + NADH + 5 H(+)(in) = a ubiquinol + NAD(+) + 4 H(+)(out)</text>
        <dbReference type="Rhea" id="RHEA:29091"/>
        <dbReference type="Rhea" id="RHEA-COMP:9565"/>
        <dbReference type="Rhea" id="RHEA-COMP:9566"/>
        <dbReference type="ChEBI" id="CHEBI:15378"/>
        <dbReference type="ChEBI" id="CHEBI:16389"/>
        <dbReference type="ChEBI" id="CHEBI:17976"/>
        <dbReference type="ChEBI" id="CHEBI:57540"/>
        <dbReference type="ChEBI" id="CHEBI:57945"/>
        <dbReference type="EC" id="7.1.1.2"/>
    </reaction>
</comment>
<comment type="subcellular location">
    <subcellularLocation>
        <location evidence="1">Mitochondrion inner membrane</location>
        <topology evidence="1">Multi-pass membrane protein</topology>
    </subcellularLocation>
</comment>
<comment type="similarity">
    <text evidence="3">Belongs to the complex I subunit 1 family.</text>
</comment>
<reference key="1">
    <citation type="journal article" date="2001" name="Cladistics">
        <title>Mitochondrial DNA evidence and evolution in Varanoidea (Squamata).</title>
        <authorList>
            <person name="Ast J.C."/>
        </authorList>
    </citation>
    <scope>NUCLEOTIDE SEQUENCE [GENOMIC DNA]</scope>
    <source>
        <strain>Isolate UMMZ 211713</strain>
    </source>
</reference>
<sequence>MSLITIINPLTYIVPILIAVAFLTLTERKILGYMQLRKGPNITGPYGLLQPIADGLKLFIKEPVRPLNTSPILLILSPVLALTMAMLIWTPIPMPYTLANLNLGFLSILAISSMAVNSILWAGWASNSKYALIGSLRAVAQTISYEVTLGIILLSILILTGGFTMQLLTATQKHIWLLATSWPLMMMWFISTLAETNRAPFDLTEGESELVSGFNVEYAGGPFALFFLAEYANIISMNLLTCILFINPGPTQHPELFLINLITKTMILTLTFLWIRASYPRFRYDQLMHLLWKQFLPLTMALCLLHVSLLISISGLPPLT</sequence>
<evidence type="ECO:0000250" key="1"/>
<evidence type="ECO:0000255" key="2"/>
<evidence type="ECO:0000305" key="3"/>
<protein>
    <recommendedName>
        <fullName>NADH-ubiquinone oxidoreductase chain 1</fullName>
        <ecNumber>7.1.1.2</ecNumber>
    </recommendedName>
    <alternativeName>
        <fullName>NADH dehydrogenase subunit 1</fullName>
    </alternativeName>
</protein>
<keyword id="KW-0249">Electron transport</keyword>
<keyword id="KW-0472">Membrane</keyword>
<keyword id="KW-0496">Mitochondrion</keyword>
<keyword id="KW-0999">Mitochondrion inner membrane</keyword>
<keyword id="KW-0520">NAD</keyword>
<keyword id="KW-0679">Respiratory chain</keyword>
<keyword id="KW-1278">Translocase</keyword>
<keyword id="KW-0812">Transmembrane</keyword>
<keyword id="KW-1133">Transmembrane helix</keyword>
<keyword id="KW-0813">Transport</keyword>
<keyword id="KW-0830">Ubiquinone</keyword>
<name>NU1M_VARJO</name>
<accession>Q94VF8</accession>
<dbReference type="EC" id="7.1.1.2"/>
<dbReference type="EMBL" id="AF407507">
    <property type="protein sequence ID" value="AAL10073.1"/>
    <property type="molecule type" value="Genomic_DNA"/>
</dbReference>
<dbReference type="SMR" id="Q94VF8"/>
<dbReference type="GO" id="GO:0005743">
    <property type="term" value="C:mitochondrial inner membrane"/>
    <property type="evidence" value="ECO:0007669"/>
    <property type="project" value="UniProtKB-SubCell"/>
</dbReference>
<dbReference type="GO" id="GO:0008137">
    <property type="term" value="F:NADH dehydrogenase (ubiquinone) activity"/>
    <property type="evidence" value="ECO:0007669"/>
    <property type="project" value="UniProtKB-EC"/>
</dbReference>
<dbReference type="GO" id="GO:0009060">
    <property type="term" value="P:aerobic respiration"/>
    <property type="evidence" value="ECO:0007669"/>
    <property type="project" value="TreeGrafter"/>
</dbReference>
<dbReference type="HAMAP" id="MF_01350">
    <property type="entry name" value="NDH1_NuoH"/>
    <property type="match status" value="1"/>
</dbReference>
<dbReference type="InterPro" id="IPR001694">
    <property type="entry name" value="NADH_UbQ_OxRdtase_su1/FPO"/>
</dbReference>
<dbReference type="InterPro" id="IPR018086">
    <property type="entry name" value="NADH_UbQ_OxRdtase_su1_CS"/>
</dbReference>
<dbReference type="PANTHER" id="PTHR11432">
    <property type="entry name" value="NADH DEHYDROGENASE SUBUNIT 1"/>
    <property type="match status" value="1"/>
</dbReference>
<dbReference type="PANTHER" id="PTHR11432:SF3">
    <property type="entry name" value="NADH-UBIQUINONE OXIDOREDUCTASE CHAIN 1"/>
    <property type="match status" value="1"/>
</dbReference>
<dbReference type="Pfam" id="PF00146">
    <property type="entry name" value="NADHdh"/>
    <property type="match status" value="1"/>
</dbReference>
<dbReference type="PROSITE" id="PS00667">
    <property type="entry name" value="COMPLEX1_ND1_1"/>
    <property type="match status" value="1"/>
</dbReference>
<dbReference type="PROSITE" id="PS00668">
    <property type="entry name" value="COMPLEX1_ND1_2"/>
    <property type="match status" value="1"/>
</dbReference>
<gene>
    <name type="primary">MT-ND1</name>
    <name type="synonym">MTND1</name>
    <name type="synonym">NADH1</name>
    <name type="synonym">ND1</name>
</gene>
<geneLocation type="mitochondrion"/>
<feature type="chain" id="PRO_0000117496" description="NADH-ubiquinone oxidoreductase chain 1">
    <location>
        <begin position="1"/>
        <end position="320"/>
    </location>
</feature>
<feature type="transmembrane region" description="Helical" evidence="2">
    <location>
        <begin position="3"/>
        <end position="23"/>
    </location>
</feature>
<feature type="transmembrane region" description="Helical" evidence="2">
    <location>
        <begin position="72"/>
        <end position="92"/>
    </location>
</feature>
<feature type="transmembrane region" description="Helical" evidence="2">
    <location>
        <begin position="103"/>
        <end position="123"/>
    </location>
</feature>
<feature type="transmembrane region" description="Helical" evidence="2">
    <location>
        <begin position="147"/>
        <end position="167"/>
    </location>
</feature>
<feature type="transmembrane region" description="Helical" evidence="2">
    <location>
        <begin position="174"/>
        <end position="194"/>
    </location>
</feature>
<feature type="transmembrane region" description="Helical" evidence="2">
    <location>
        <begin position="226"/>
        <end position="246"/>
    </location>
</feature>
<feature type="transmembrane region" description="Helical" evidence="2">
    <location>
        <begin position="255"/>
        <end position="275"/>
    </location>
</feature>
<feature type="transmembrane region" description="Helical" evidence="2">
    <location>
        <begin position="295"/>
        <end position="315"/>
    </location>
</feature>
<organism>
    <name type="scientific">Varanus jobiensis</name>
    <name type="common">Peach throat monitor</name>
    <dbReference type="NCBI Taxonomy" id="169843"/>
    <lineage>
        <taxon>Eukaryota</taxon>
        <taxon>Metazoa</taxon>
        <taxon>Chordata</taxon>
        <taxon>Craniata</taxon>
        <taxon>Vertebrata</taxon>
        <taxon>Euteleostomi</taxon>
        <taxon>Lepidosauria</taxon>
        <taxon>Squamata</taxon>
        <taxon>Bifurcata</taxon>
        <taxon>Unidentata</taxon>
        <taxon>Episquamata</taxon>
        <taxon>Toxicofera</taxon>
        <taxon>Anguimorpha</taxon>
        <taxon>Paleoanguimorpha</taxon>
        <taxon>Varanoidea</taxon>
        <taxon>Varanidae</taxon>
        <taxon>Varanus</taxon>
    </lineage>
</organism>
<proteinExistence type="inferred from homology"/>